<evidence type="ECO:0000250" key="1"/>
<evidence type="ECO:0000250" key="2">
    <source>
        <dbReference type="UniProtKB" id="O15551"/>
    </source>
</evidence>
<evidence type="ECO:0000250" key="3">
    <source>
        <dbReference type="UniProtKB" id="Q63400"/>
    </source>
</evidence>
<evidence type="ECO:0000250" key="4">
    <source>
        <dbReference type="UniProtKB" id="Q9Z0G9"/>
    </source>
</evidence>
<evidence type="ECO:0000255" key="5"/>
<evidence type="ECO:0000305" key="6"/>
<organism>
    <name type="scientific">Canis lupus familiaris</name>
    <name type="common">Dog</name>
    <name type="synonym">Canis familiaris</name>
    <dbReference type="NCBI Taxonomy" id="9615"/>
    <lineage>
        <taxon>Eukaryota</taxon>
        <taxon>Metazoa</taxon>
        <taxon>Chordata</taxon>
        <taxon>Craniata</taxon>
        <taxon>Vertebrata</taxon>
        <taxon>Euteleostomi</taxon>
        <taxon>Mammalia</taxon>
        <taxon>Eutheria</taxon>
        <taxon>Laurasiatheria</taxon>
        <taxon>Carnivora</taxon>
        <taxon>Caniformia</taxon>
        <taxon>Canidae</taxon>
        <taxon>Canis</taxon>
    </lineage>
</organism>
<proteinExistence type="evidence at transcript level"/>
<reference key="1">
    <citation type="journal article" date="2001" name="J. Cell Biol.">
        <title>Conversion of zonulae occludentes from tight to leaky strand type by introducing claudin-2 into Madin-Darby canine kidney I cells.</title>
        <authorList>
            <person name="Furuse M."/>
            <person name="Furuse K."/>
            <person name="Sasaki H."/>
            <person name="Tsukita S."/>
        </authorList>
    </citation>
    <scope>NUCLEOTIDE SEQUENCE [MRNA]</scope>
    <source>
        <tissue>Liver</tissue>
    </source>
</reference>
<comment type="function">
    <text evidence="4">Plays a major role in tight junction-specific obliteration of the intercellular space, through calcium-independent cell-adhesion activity.</text>
</comment>
<comment type="subunit">
    <text evidence="2 4">Can form homo- and heteropolymers with other CLDN. Homopolymers interact with CLDN1 and CLDN2 homopolymers. Interacts in cis (within the same plasma membrane) with CLDN19. Directly interacts with TJP1/ZO-1, TJP2/ZO-2 and TJP3/ZO-3 (By similarity).</text>
</comment>
<comment type="subcellular location">
    <subcellularLocation>
        <location evidence="4">Cell junction</location>
        <location evidence="4">Tight junction</location>
    </subcellularLocation>
    <subcellularLocation>
        <location evidence="4">Cell membrane</location>
        <topology evidence="4">Multi-pass membrane protein</topology>
    </subcellularLocation>
</comment>
<comment type="similarity">
    <text evidence="6">Belongs to the claudin family.</text>
</comment>
<accession>Q95KM5</accession>
<gene>
    <name type="primary">CLDN3</name>
</gene>
<sequence length="218" mass="23148">MSMGLEIAGTSLAVLGWLSTIVCCALPMWRVTAFIGSSIITAQITWEGLWMNCVVQSTGQMQCKVYDSLLALPQDLQAARALIVVSILLAAFGLLVALVGAQCTNCVQDDTAKAKITIVAGVLFLLAALLTLVPVSWSANTIIRDFYNPLVPDAQKREMGAGLYVGWAAAALQLLGGALLCCSCPPRDKKYAPTKIVYSAPRSAGPGTSTAYDRKDYV</sequence>
<feature type="chain" id="PRO_0000144737" description="Claudin-3">
    <location>
        <begin position="1"/>
        <end position="218"/>
    </location>
</feature>
<feature type="topological domain" description="Cytoplasmic" evidence="5">
    <location>
        <begin position="1"/>
        <end position="8"/>
    </location>
</feature>
<feature type="transmembrane region" description="Helical" evidence="5">
    <location>
        <begin position="9"/>
        <end position="29"/>
    </location>
</feature>
<feature type="topological domain" description="Extracellular" evidence="5">
    <location>
        <begin position="30"/>
        <end position="80"/>
    </location>
</feature>
<feature type="transmembrane region" description="Helical" evidence="5">
    <location>
        <begin position="81"/>
        <end position="101"/>
    </location>
</feature>
<feature type="topological domain" description="Cytoplasmic" evidence="5">
    <location>
        <begin position="102"/>
        <end position="115"/>
    </location>
</feature>
<feature type="transmembrane region" description="Helical" evidence="5">
    <location>
        <begin position="116"/>
        <end position="136"/>
    </location>
</feature>
<feature type="topological domain" description="Extracellular" evidence="5">
    <location>
        <begin position="137"/>
        <end position="159"/>
    </location>
</feature>
<feature type="transmembrane region" description="Helical" evidence="5">
    <location>
        <begin position="160"/>
        <end position="180"/>
    </location>
</feature>
<feature type="topological domain" description="Cytoplasmic" evidence="5">
    <location>
        <begin position="181"/>
        <end position="218"/>
    </location>
</feature>
<feature type="region of interest" description="Interactions with TJP1, TJP2 and TJP3" evidence="1">
    <location>
        <begin position="217"/>
        <end position="218"/>
    </location>
</feature>
<feature type="modified residue" description="Phosphotyrosine" evidence="4">
    <location>
        <position position="198"/>
    </location>
</feature>
<feature type="modified residue" description="Phosphoserine" evidence="3">
    <location>
        <position position="199"/>
    </location>
</feature>
<feature type="modified residue" description="Phosphoserine" evidence="2">
    <location>
        <position position="209"/>
    </location>
</feature>
<dbReference type="EMBL" id="AF358908">
    <property type="protein sequence ID" value="AAK51434.1"/>
    <property type="molecule type" value="mRNA"/>
</dbReference>
<dbReference type="RefSeq" id="NP_001003088.1">
    <property type="nucleotide sequence ID" value="NM_001003088.1"/>
</dbReference>
<dbReference type="SMR" id="Q95KM5"/>
<dbReference type="FunCoup" id="Q95KM5">
    <property type="interactions" value="119"/>
</dbReference>
<dbReference type="PaxDb" id="9612-ENSCAFP00000018448"/>
<dbReference type="Ensembl" id="ENSCAFT00000095044.1">
    <property type="protein sequence ID" value="ENSCAFP00000067609.1"/>
    <property type="gene ID" value="ENSCAFG00000054920.1"/>
</dbReference>
<dbReference type="Ensembl" id="ENSCAFT00040019610.1">
    <property type="protein sequence ID" value="ENSCAFP00040017024.1"/>
    <property type="gene ID" value="ENSCAFG00040010589.1"/>
</dbReference>
<dbReference type="Ensembl" id="ENSCAFT00845005651.1">
    <property type="protein sequence ID" value="ENSCAFP00845004483.1"/>
    <property type="gene ID" value="ENSCAFG00845003145.1"/>
</dbReference>
<dbReference type="GeneID" id="403648"/>
<dbReference type="KEGG" id="cfa:403648"/>
<dbReference type="CTD" id="1365"/>
<dbReference type="VEuPathDB" id="HostDB:ENSCAFG00845003145"/>
<dbReference type="eggNOG" id="ENOG502QRZ8">
    <property type="taxonomic scope" value="Eukaryota"/>
</dbReference>
<dbReference type="GeneTree" id="ENSGT00940000162095"/>
<dbReference type="HOGENOM" id="CLU_076370_1_2_1"/>
<dbReference type="InParanoid" id="Q95KM5"/>
<dbReference type="OMA" id="WLCSIIC"/>
<dbReference type="OrthoDB" id="9899584at2759"/>
<dbReference type="TreeFam" id="TF331936"/>
<dbReference type="Proteomes" id="UP000002254">
    <property type="component" value="Chromosome 6"/>
</dbReference>
<dbReference type="Proteomes" id="UP000694429">
    <property type="component" value="Unplaced"/>
</dbReference>
<dbReference type="Proteomes" id="UP000694542">
    <property type="component" value="Chromosome 6"/>
</dbReference>
<dbReference type="Proteomes" id="UP000805418">
    <property type="component" value="Chromosome 6"/>
</dbReference>
<dbReference type="GO" id="GO:0016327">
    <property type="term" value="C:apicolateral plasma membrane"/>
    <property type="evidence" value="ECO:0007669"/>
    <property type="project" value="Ensembl"/>
</dbReference>
<dbReference type="GO" id="GO:0005923">
    <property type="term" value="C:bicellular tight junction"/>
    <property type="evidence" value="ECO:0000250"/>
    <property type="project" value="UniProtKB"/>
</dbReference>
<dbReference type="GO" id="GO:0016328">
    <property type="term" value="C:lateral plasma membrane"/>
    <property type="evidence" value="ECO:0007669"/>
    <property type="project" value="Ensembl"/>
</dbReference>
<dbReference type="GO" id="GO:0005886">
    <property type="term" value="C:plasma membrane"/>
    <property type="evidence" value="ECO:0000318"/>
    <property type="project" value="GO_Central"/>
</dbReference>
<dbReference type="GO" id="GO:0032991">
    <property type="term" value="C:protein-containing complex"/>
    <property type="evidence" value="ECO:0007669"/>
    <property type="project" value="Ensembl"/>
</dbReference>
<dbReference type="GO" id="GO:0098632">
    <property type="term" value="F:cell-cell adhesion mediator activity"/>
    <property type="evidence" value="ECO:0007669"/>
    <property type="project" value="Ensembl"/>
</dbReference>
<dbReference type="GO" id="GO:0042802">
    <property type="term" value="F:identical protein binding"/>
    <property type="evidence" value="ECO:0000250"/>
    <property type="project" value="UniProtKB"/>
</dbReference>
<dbReference type="GO" id="GO:0005198">
    <property type="term" value="F:structural molecule activity"/>
    <property type="evidence" value="ECO:0007669"/>
    <property type="project" value="Ensembl"/>
</dbReference>
<dbReference type="GO" id="GO:0030036">
    <property type="term" value="P:actin cytoskeleton organization"/>
    <property type="evidence" value="ECO:0007669"/>
    <property type="project" value="Ensembl"/>
</dbReference>
<dbReference type="GO" id="GO:0070830">
    <property type="term" value="P:bicellular tight junction assembly"/>
    <property type="evidence" value="ECO:0000318"/>
    <property type="project" value="GO_Central"/>
</dbReference>
<dbReference type="GO" id="GO:0016338">
    <property type="term" value="P:calcium-independent cell-cell adhesion via plasma membrane cell-adhesion molecules"/>
    <property type="evidence" value="ECO:0000250"/>
    <property type="project" value="UniProtKB"/>
</dbReference>
<dbReference type="GO" id="GO:0007155">
    <property type="term" value="P:cell adhesion"/>
    <property type="evidence" value="ECO:0000318"/>
    <property type="project" value="GO_Central"/>
</dbReference>
<dbReference type="GO" id="GO:0045217">
    <property type="term" value="P:cell-cell junction maintenance"/>
    <property type="evidence" value="ECO:0007669"/>
    <property type="project" value="Ensembl"/>
</dbReference>
<dbReference type="GO" id="GO:0003382">
    <property type="term" value="P:epithelial cell morphogenesis"/>
    <property type="evidence" value="ECO:0000250"/>
    <property type="project" value="UniProtKB"/>
</dbReference>
<dbReference type="GO" id="GO:0014045">
    <property type="term" value="P:establishment of endothelial blood-brain barrier"/>
    <property type="evidence" value="ECO:0007669"/>
    <property type="project" value="Ensembl"/>
</dbReference>
<dbReference type="GO" id="GO:0030336">
    <property type="term" value="P:negative regulation of cell migration"/>
    <property type="evidence" value="ECO:0007669"/>
    <property type="project" value="Ensembl"/>
</dbReference>
<dbReference type="GO" id="GO:0008285">
    <property type="term" value="P:negative regulation of cell population proliferation"/>
    <property type="evidence" value="ECO:0007669"/>
    <property type="project" value="Ensembl"/>
</dbReference>
<dbReference type="GO" id="GO:0010629">
    <property type="term" value="P:negative regulation of gene expression"/>
    <property type="evidence" value="ECO:0007669"/>
    <property type="project" value="Ensembl"/>
</dbReference>
<dbReference type="GO" id="GO:2000186">
    <property type="term" value="P:negative regulation of phosphate transmembrane transport"/>
    <property type="evidence" value="ECO:0007669"/>
    <property type="project" value="Ensembl"/>
</dbReference>
<dbReference type="GO" id="GO:0030335">
    <property type="term" value="P:positive regulation of cell migration"/>
    <property type="evidence" value="ECO:0007669"/>
    <property type="project" value="Ensembl"/>
</dbReference>
<dbReference type="GO" id="GO:0010628">
    <property type="term" value="P:positive regulation of gene expression"/>
    <property type="evidence" value="ECO:0007669"/>
    <property type="project" value="Ensembl"/>
</dbReference>
<dbReference type="GO" id="GO:0090303">
    <property type="term" value="P:positive regulation of wound healing"/>
    <property type="evidence" value="ECO:0007669"/>
    <property type="project" value="Ensembl"/>
</dbReference>
<dbReference type="GO" id="GO:0022604">
    <property type="term" value="P:regulation of cell morphogenesis"/>
    <property type="evidence" value="ECO:0007669"/>
    <property type="project" value="Ensembl"/>
</dbReference>
<dbReference type="GO" id="GO:0090559">
    <property type="term" value="P:regulation of membrane permeability"/>
    <property type="evidence" value="ECO:0007669"/>
    <property type="project" value="Ensembl"/>
</dbReference>
<dbReference type="GO" id="GO:0150111">
    <property type="term" value="P:regulation of transepithelial transport"/>
    <property type="evidence" value="ECO:0007669"/>
    <property type="project" value="Ensembl"/>
</dbReference>
<dbReference type="GO" id="GO:0001666">
    <property type="term" value="P:response to hypoxia"/>
    <property type="evidence" value="ECO:0007669"/>
    <property type="project" value="Ensembl"/>
</dbReference>
<dbReference type="GO" id="GO:0003406">
    <property type="term" value="P:retinal pigment epithelium development"/>
    <property type="evidence" value="ECO:0007669"/>
    <property type="project" value="Ensembl"/>
</dbReference>
<dbReference type="FunFam" id="1.20.140.150:FF:000001">
    <property type="entry name" value="Claudin"/>
    <property type="match status" value="1"/>
</dbReference>
<dbReference type="Gene3D" id="1.20.140.150">
    <property type="match status" value="1"/>
</dbReference>
<dbReference type="InterPro" id="IPR006187">
    <property type="entry name" value="Claudin"/>
</dbReference>
<dbReference type="InterPro" id="IPR003549">
    <property type="entry name" value="Claudin3"/>
</dbReference>
<dbReference type="InterPro" id="IPR017974">
    <property type="entry name" value="Claudin_CS"/>
</dbReference>
<dbReference type="InterPro" id="IPR004031">
    <property type="entry name" value="PMP22/EMP/MP20/Claudin"/>
</dbReference>
<dbReference type="PANTHER" id="PTHR12002">
    <property type="entry name" value="CLAUDIN"/>
    <property type="match status" value="1"/>
</dbReference>
<dbReference type="Pfam" id="PF00822">
    <property type="entry name" value="PMP22_Claudin"/>
    <property type="match status" value="1"/>
</dbReference>
<dbReference type="PRINTS" id="PR01077">
    <property type="entry name" value="CLAUDIN"/>
</dbReference>
<dbReference type="PRINTS" id="PR01378">
    <property type="entry name" value="CLAUDIN3"/>
</dbReference>
<dbReference type="PROSITE" id="PS01346">
    <property type="entry name" value="CLAUDIN"/>
    <property type="match status" value="1"/>
</dbReference>
<name>CLD3_CANLF</name>
<keyword id="KW-0965">Cell junction</keyword>
<keyword id="KW-1003">Cell membrane</keyword>
<keyword id="KW-0472">Membrane</keyword>
<keyword id="KW-0597">Phosphoprotein</keyword>
<keyword id="KW-1185">Reference proteome</keyword>
<keyword id="KW-0796">Tight junction</keyword>
<keyword id="KW-0812">Transmembrane</keyword>
<keyword id="KW-1133">Transmembrane helix</keyword>
<protein>
    <recommendedName>
        <fullName>Claudin-3</fullName>
    </recommendedName>
</protein>